<gene>
    <name evidence="1" type="primary">rpsQ</name>
    <name type="ordered locus">ABO_0406</name>
</gene>
<comment type="function">
    <text evidence="1">One of the primary rRNA binding proteins, it binds specifically to the 5'-end of 16S ribosomal RNA.</text>
</comment>
<comment type="subunit">
    <text evidence="1">Part of the 30S ribosomal subunit.</text>
</comment>
<comment type="similarity">
    <text evidence="1">Belongs to the universal ribosomal protein uS17 family.</text>
</comment>
<proteinExistence type="inferred from homology"/>
<keyword id="KW-1185">Reference proteome</keyword>
<keyword id="KW-0687">Ribonucleoprotein</keyword>
<keyword id="KW-0689">Ribosomal protein</keyword>
<keyword id="KW-0694">RNA-binding</keyword>
<keyword id="KW-0699">rRNA-binding</keyword>
<feature type="chain" id="PRO_0000255663" description="Small ribosomal subunit protein uS17">
    <location>
        <begin position="1"/>
        <end position="87"/>
    </location>
</feature>
<organism>
    <name type="scientific">Alcanivorax borkumensis (strain ATCC 700651 / DSM 11573 / NCIMB 13689 / SK2)</name>
    <dbReference type="NCBI Taxonomy" id="393595"/>
    <lineage>
        <taxon>Bacteria</taxon>
        <taxon>Pseudomonadati</taxon>
        <taxon>Pseudomonadota</taxon>
        <taxon>Gammaproteobacteria</taxon>
        <taxon>Oceanospirillales</taxon>
        <taxon>Alcanivoracaceae</taxon>
        <taxon>Alcanivorax</taxon>
    </lineage>
</organism>
<dbReference type="EMBL" id="AM286690">
    <property type="protein sequence ID" value="CAL15854.1"/>
    <property type="molecule type" value="Genomic_DNA"/>
</dbReference>
<dbReference type="RefSeq" id="WP_011587695.1">
    <property type="nucleotide sequence ID" value="NC_008260.1"/>
</dbReference>
<dbReference type="SMR" id="Q0VSJ4"/>
<dbReference type="STRING" id="393595.ABO_0406"/>
<dbReference type="KEGG" id="abo:ABO_0406"/>
<dbReference type="eggNOG" id="COG0186">
    <property type="taxonomic scope" value="Bacteria"/>
</dbReference>
<dbReference type="HOGENOM" id="CLU_073626_1_1_6"/>
<dbReference type="OrthoDB" id="9811714at2"/>
<dbReference type="Proteomes" id="UP000008871">
    <property type="component" value="Chromosome"/>
</dbReference>
<dbReference type="GO" id="GO:0022627">
    <property type="term" value="C:cytosolic small ribosomal subunit"/>
    <property type="evidence" value="ECO:0007669"/>
    <property type="project" value="TreeGrafter"/>
</dbReference>
<dbReference type="GO" id="GO:0019843">
    <property type="term" value="F:rRNA binding"/>
    <property type="evidence" value="ECO:0007669"/>
    <property type="project" value="UniProtKB-UniRule"/>
</dbReference>
<dbReference type="GO" id="GO:0003735">
    <property type="term" value="F:structural constituent of ribosome"/>
    <property type="evidence" value="ECO:0007669"/>
    <property type="project" value="InterPro"/>
</dbReference>
<dbReference type="GO" id="GO:0006412">
    <property type="term" value="P:translation"/>
    <property type="evidence" value="ECO:0007669"/>
    <property type="project" value="UniProtKB-UniRule"/>
</dbReference>
<dbReference type="CDD" id="cd00364">
    <property type="entry name" value="Ribosomal_uS17"/>
    <property type="match status" value="1"/>
</dbReference>
<dbReference type="Gene3D" id="2.40.50.140">
    <property type="entry name" value="Nucleic acid-binding proteins"/>
    <property type="match status" value="1"/>
</dbReference>
<dbReference type="HAMAP" id="MF_01345_B">
    <property type="entry name" value="Ribosomal_uS17_B"/>
    <property type="match status" value="1"/>
</dbReference>
<dbReference type="InterPro" id="IPR012340">
    <property type="entry name" value="NA-bd_OB-fold"/>
</dbReference>
<dbReference type="InterPro" id="IPR000266">
    <property type="entry name" value="Ribosomal_uS17"/>
</dbReference>
<dbReference type="InterPro" id="IPR019984">
    <property type="entry name" value="Ribosomal_uS17_bact/chlr"/>
</dbReference>
<dbReference type="InterPro" id="IPR019979">
    <property type="entry name" value="Ribosomal_uS17_CS"/>
</dbReference>
<dbReference type="NCBIfam" id="NF004123">
    <property type="entry name" value="PRK05610.1"/>
    <property type="match status" value="1"/>
</dbReference>
<dbReference type="NCBIfam" id="TIGR03635">
    <property type="entry name" value="uS17_bact"/>
    <property type="match status" value="1"/>
</dbReference>
<dbReference type="PANTHER" id="PTHR10744">
    <property type="entry name" value="40S RIBOSOMAL PROTEIN S11 FAMILY MEMBER"/>
    <property type="match status" value="1"/>
</dbReference>
<dbReference type="PANTHER" id="PTHR10744:SF1">
    <property type="entry name" value="SMALL RIBOSOMAL SUBUNIT PROTEIN US17M"/>
    <property type="match status" value="1"/>
</dbReference>
<dbReference type="Pfam" id="PF00366">
    <property type="entry name" value="Ribosomal_S17"/>
    <property type="match status" value="1"/>
</dbReference>
<dbReference type="PRINTS" id="PR00973">
    <property type="entry name" value="RIBOSOMALS17"/>
</dbReference>
<dbReference type="SUPFAM" id="SSF50249">
    <property type="entry name" value="Nucleic acid-binding proteins"/>
    <property type="match status" value="1"/>
</dbReference>
<dbReference type="PROSITE" id="PS00056">
    <property type="entry name" value="RIBOSOMAL_S17"/>
    <property type="match status" value="1"/>
</dbReference>
<name>RS17_ALCBS</name>
<accession>Q0VSJ4</accession>
<protein>
    <recommendedName>
        <fullName evidence="1">Small ribosomal subunit protein uS17</fullName>
    </recommendedName>
    <alternativeName>
        <fullName evidence="2">30S ribosomal protein S17</fullName>
    </alternativeName>
</protein>
<evidence type="ECO:0000255" key="1">
    <source>
        <dbReference type="HAMAP-Rule" id="MF_01345"/>
    </source>
</evidence>
<evidence type="ECO:0000305" key="2"/>
<reference key="1">
    <citation type="journal article" date="2006" name="Nat. Biotechnol.">
        <title>Genome sequence of the ubiquitous hydrocarbon-degrading marine bacterium Alcanivorax borkumensis.</title>
        <authorList>
            <person name="Schneiker S."/>
            <person name="Martins dos Santos V.A.P."/>
            <person name="Bartels D."/>
            <person name="Bekel T."/>
            <person name="Brecht M."/>
            <person name="Buhrmester J."/>
            <person name="Chernikova T.N."/>
            <person name="Denaro R."/>
            <person name="Ferrer M."/>
            <person name="Gertler C."/>
            <person name="Goesmann A."/>
            <person name="Golyshina O.V."/>
            <person name="Kaminski F."/>
            <person name="Khachane A.N."/>
            <person name="Lang S."/>
            <person name="Linke B."/>
            <person name="McHardy A.C."/>
            <person name="Meyer F."/>
            <person name="Nechitaylo T."/>
            <person name="Puehler A."/>
            <person name="Regenhardt D."/>
            <person name="Rupp O."/>
            <person name="Sabirova J.S."/>
            <person name="Selbitschka W."/>
            <person name="Yakimov M.M."/>
            <person name="Timmis K.N."/>
            <person name="Vorhoelter F.-J."/>
            <person name="Weidner S."/>
            <person name="Kaiser O."/>
            <person name="Golyshin P.N."/>
        </authorList>
    </citation>
    <scope>NUCLEOTIDE SEQUENCE [LARGE SCALE GENOMIC DNA]</scope>
    <source>
        <strain>ATCC 700651 / DSM 11573 / NCIMB 13689 / SK2</strain>
    </source>
</reference>
<sequence length="87" mass="9938">MAEANTMRRTATGKVISNKGDKTITVLVERRVQHPIYGKIIKRSTKLMAHDEENQCREGDLVTIEECRPLSKRKAWMLVNVVEQSKA</sequence>